<reference key="1">
    <citation type="journal article" date="2005" name="J. Bacteriol.">
        <title>Whole-genome sequencing of Staphylococcus haemolyticus uncovers the extreme plasticity of its genome and the evolution of human-colonizing staphylococcal species.</title>
        <authorList>
            <person name="Takeuchi F."/>
            <person name="Watanabe S."/>
            <person name="Baba T."/>
            <person name="Yuzawa H."/>
            <person name="Ito T."/>
            <person name="Morimoto Y."/>
            <person name="Kuroda M."/>
            <person name="Cui L."/>
            <person name="Takahashi M."/>
            <person name="Ankai A."/>
            <person name="Baba S."/>
            <person name="Fukui S."/>
            <person name="Lee J.C."/>
            <person name="Hiramatsu K."/>
        </authorList>
    </citation>
    <scope>NUCLEOTIDE SEQUENCE [LARGE SCALE GENOMIC DNA]</scope>
    <source>
        <strain>JCSC1435</strain>
    </source>
</reference>
<name>RSMG_STAHJ</name>
<organism>
    <name type="scientific">Staphylococcus haemolyticus (strain JCSC1435)</name>
    <dbReference type="NCBI Taxonomy" id="279808"/>
    <lineage>
        <taxon>Bacteria</taxon>
        <taxon>Bacillati</taxon>
        <taxon>Bacillota</taxon>
        <taxon>Bacilli</taxon>
        <taxon>Bacillales</taxon>
        <taxon>Staphylococcaceae</taxon>
        <taxon>Staphylococcus</taxon>
    </lineage>
</organism>
<keyword id="KW-0963">Cytoplasm</keyword>
<keyword id="KW-0489">Methyltransferase</keyword>
<keyword id="KW-0698">rRNA processing</keyword>
<keyword id="KW-0949">S-adenosyl-L-methionine</keyword>
<keyword id="KW-0808">Transferase</keyword>
<evidence type="ECO:0000255" key="1">
    <source>
        <dbReference type="HAMAP-Rule" id="MF_00074"/>
    </source>
</evidence>
<evidence type="ECO:0000256" key="2">
    <source>
        <dbReference type="SAM" id="MobiDB-lite"/>
    </source>
</evidence>
<feature type="chain" id="PRO_0000184336" description="Ribosomal RNA small subunit methyltransferase G">
    <location>
        <begin position="1"/>
        <end position="240"/>
    </location>
</feature>
<feature type="region of interest" description="Disordered" evidence="2">
    <location>
        <begin position="218"/>
        <end position="240"/>
    </location>
</feature>
<feature type="binding site" evidence="1">
    <location>
        <position position="78"/>
    </location>
    <ligand>
        <name>S-adenosyl-L-methionine</name>
        <dbReference type="ChEBI" id="CHEBI:59789"/>
    </ligand>
</feature>
<feature type="binding site" evidence="1">
    <location>
        <position position="83"/>
    </location>
    <ligand>
        <name>S-adenosyl-L-methionine</name>
        <dbReference type="ChEBI" id="CHEBI:59789"/>
    </ligand>
</feature>
<feature type="binding site" evidence="1">
    <location>
        <begin position="129"/>
        <end position="130"/>
    </location>
    <ligand>
        <name>S-adenosyl-L-methionine</name>
        <dbReference type="ChEBI" id="CHEBI:59789"/>
    </ligand>
</feature>
<feature type="binding site" evidence="1">
    <location>
        <position position="147"/>
    </location>
    <ligand>
        <name>S-adenosyl-L-methionine</name>
        <dbReference type="ChEBI" id="CHEBI:59789"/>
    </ligand>
</feature>
<sequence>MNGIEWLAKELSEHGIELSDKQKEQFQTYYRLLVEWNEKMNLTSITDEHEVYLKHFYDSITPSFYYDFNQPLTICDVGAGAGFPSIPLKVVYPELKVTIVDSLNKRIQFLNHLAAELGLTQVSFVHDRAETFGKGVNRETYDVVTARAVARLTVLSELCLPLVKKGGQFIALKSSKGEEELEEAQFGISILGGVFSDSYTFDLPEDAGERQMIIIDKRRQTSKKYPRKPGTPNKSPLLEN</sequence>
<proteinExistence type="inferred from homology"/>
<comment type="function">
    <text evidence="1">Specifically methylates the N7 position of guanine in position 535 of 16S rRNA.</text>
</comment>
<comment type="subcellular location">
    <subcellularLocation>
        <location evidence="1">Cytoplasm</location>
    </subcellularLocation>
</comment>
<comment type="similarity">
    <text evidence="1">Belongs to the methyltransferase superfamily. RNA methyltransferase RsmG family.</text>
</comment>
<protein>
    <recommendedName>
        <fullName evidence="1">Ribosomal RNA small subunit methyltransferase G</fullName>
        <ecNumber evidence="1">2.1.1.-</ecNumber>
    </recommendedName>
    <alternativeName>
        <fullName evidence="1">16S rRNA 7-methylguanosine methyltransferase</fullName>
        <shortName evidence="1">16S rRNA m7G methyltransferase</shortName>
    </alternativeName>
</protein>
<dbReference type="EC" id="2.1.1.-" evidence="1"/>
<dbReference type="EMBL" id="AP006716">
    <property type="protein sequence ID" value="BAE05983.1"/>
    <property type="molecule type" value="Genomic_DNA"/>
</dbReference>
<dbReference type="RefSeq" id="WP_011276913.1">
    <property type="nucleotide sequence ID" value="NC_007168.1"/>
</dbReference>
<dbReference type="SMR" id="Q4L2Z4"/>
<dbReference type="KEGG" id="sha:SH2674"/>
<dbReference type="eggNOG" id="COG0357">
    <property type="taxonomic scope" value="Bacteria"/>
</dbReference>
<dbReference type="HOGENOM" id="CLU_065341_0_0_9"/>
<dbReference type="OrthoDB" id="9808773at2"/>
<dbReference type="Proteomes" id="UP000000543">
    <property type="component" value="Chromosome"/>
</dbReference>
<dbReference type="GO" id="GO:0005829">
    <property type="term" value="C:cytosol"/>
    <property type="evidence" value="ECO:0007669"/>
    <property type="project" value="TreeGrafter"/>
</dbReference>
<dbReference type="GO" id="GO:0070043">
    <property type="term" value="F:rRNA (guanine-N7-)-methyltransferase activity"/>
    <property type="evidence" value="ECO:0007669"/>
    <property type="project" value="UniProtKB-UniRule"/>
</dbReference>
<dbReference type="CDD" id="cd02440">
    <property type="entry name" value="AdoMet_MTases"/>
    <property type="match status" value="1"/>
</dbReference>
<dbReference type="FunFam" id="3.40.50.150:FF:000041">
    <property type="entry name" value="Ribosomal RNA small subunit methyltransferase G"/>
    <property type="match status" value="1"/>
</dbReference>
<dbReference type="Gene3D" id="3.40.50.150">
    <property type="entry name" value="Vaccinia Virus protein VP39"/>
    <property type="match status" value="1"/>
</dbReference>
<dbReference type="HAMAP" id="MF_00074">
    <property type="entry name" value="16SrRNA_methyltr_G"/>
    <property type="match status" value="1"/>
</dbReference>
<dbReference type="InterPro" id="IPR003682">
    <property type="entry name" value="rRNA_ssu_MeTfrase_G"/>
</dbReference>
<dbReference type="InterPro" id="IPR029063">
    <property type="entry name" value="SAM-dependent_MTases_sf"/>
</dbReference>
<dbReference type="NCBIfam" id="TIGR00138">
    <property type="entry name" value="rsmG_gidB"/>
    <property type="match status" value="1"/>
</dbReference>
<dbReference type="PANTHER" id="PTHR31760">
    <property type="entry name" value="S-ADENOSYL-L-METHIONINE-DEPENDENT METHYLTRANSFERASES SUPERFAMILY PROTEIN"/>
    <property type="match status" value="1"/>
</dbReference>
<dbReference type="PANTHER" id="PTHR31760:SF0">
    <property type="entry name" value="S-ADENOSYL-L-METHIONINE-DEPENDENT METHYLTRANSFERASES SUPERFAMILY PROTEIN"/>
    <property type="match status" value="1"/>
</dbReference>
<dbReference type="Pfam" id="PF02527">
    <property type="entry name" value="GidB"/>
    <property type="match status" value="1"/>
</dbReference>
<dbReference type="PIRSF" id="PIRSF003078">
    <property type="entry name" value="GidB"/>
    <property type="match status" value="1"/>
</dbReference>
<dbReference type="SUPFAM" id="SSF53335">
    <property type="entry name" value="S-adenosyl-L-methionine-dependent methyltransferases"/>
    <property type="match status" value="1"/>
</dbReference>
<accession>Q4L2Z4</accession>
<gene>
    <name evidence="1" type="primary">rsmG</name>
    <name type="ordered locus">SH2674</name>
</gene>